<feature type="chain" id="PRO_0000069678" description="Histamine H1 receptor">
    <location>
        <begin position="1"/>
        <end position="487"/>
    </location>
</feature>
<feature type="topological domain" description="Extracellular" evidence="6">
    <location>
        <begin position="1"/>
        <end position="29"/>
    </location>
</feature>
<feature type="transmembrane region" description="Helical; Name=1" evidence="1">
    <location>
        <begin position="30"/>
        <end position="50"/>
    </location>
</feature>
<feature type="topological domain" description="Cytoplasmic" evidence="6">
    <location>
        <begin position="51"/>
        <end position="64"/>
    </location>
</feature>
<feature type="transmembrane region" description="Helical; Name=2" evidence="1">
    <location>
        <begin position="65"/>
        <end position="89"/>
    </location>
</feature>
<feature type="topological domain" description="Extracellular" evidence="6">
    <location>
        <begin position="90"/>
        <end position="97"/>
    </location>
</feature>
<feature type="transmembrane region" description="Helical; Name=3" evidence="1">
    <location>
        <begin position="98"/>
        <end position="123"/>
    </location>
</feature>
<feature type="topological domain" description="Cytoplasmic" evidence="6">
    <location>
        <begin position="124"/>
        <end position="144"/>
    </location>
</feature>
<feature type="transmembrane region" description="Helical; Name=4" evidence="1">
    <location>
        <begin position="145"/>
        <end position="164"/>
    </location>
</feature>
<feature type="topological domain" description="Extracellular" evidence="6">
    <location>
        <begin position="165"/>
        <end position="188"/>
    </location>
</feature>
<feature type="transmembrane region" description="Helical; Name=5" evidence="1">
    <location>
        <begin position="189"/>
        <end position="211"/>
    </location>
</feature>
<feature type="topological domain" description="Cytoplasmic" evidence="6">
    <location>
        <begin position="212"/>
        <end position="416"/>
    </location>
</feature>
<feature type="transmembrane region" description="Helical; Name=6" evidence="1">
    <location>
        <begin position="417"/>
        <end position="440"/>
    </location>
</feature>
<feature type="topological domain" description="Extracellular" evidence="6">
    <location>
        <begin position="441"/>
        <end position="446"/>
    </location>
</feature>
<feature type="transmembrane region" description="Helical; Name=7" evidence="1">
    <location>
        <begin position="447"/>
        <end position="469"/>
    </location>
</feature>
<feature type="topological domain" description="Cytoplasmic" evidence="6">
    <location>
        <begin position="470"/>
        <end position="487"/>
    </location>
</feature>
<feature type="region of interest" description="Important for agonist binding" evidence="1">
    <location>
        <begin position="107"/>
        <end position="112"/>
    </location>
</feature>
<feature type="region of interest" description="Disordered" evidence="5">
    <location>
        <begin position="238"/>
        <end position="292"/>
    </location>
</feature>
<feature type="region of interest" description="Disordered" evidence="5">
    <location>
        <begin position="345"/>
        <end position="379"/>
    </location>
</feature>
<feature type="region of interest" description="Important for agonist binding" evidence="1">
    <location>
        <begin position="424"/>
        <end position="428"/>
    </location>
</feature>
<feature type="compositionally biased region" description="Basic and acidic residues" evidence="5">
    <location>
        <begin position="238"/>
        <end position="261"/>
    </location>
</feature>
<feature type="compositionally biased region" description="Polar residues" evidence="5">
    <location>
        <begin position="353"/>
        <end position="369"/>
    </location>
</feature>
<feature type="binding site" evidence="1">
    <location>
        <position position="107"/>
    </location>
    <ligand>
        <name>histamine</name>
        <dbReference type="ChEBI" id="CHEBI:58432"/>
    </ligand>
</feature>
<feature type="binding site" evidence="1">
    <location>
        <position position="112"/>
    </location>
    <ligand>
        <name>histamine</name>
        <dbReference type="ChEBI" id="CHEBI:58432"/>
    </ligand>
</feature>
<feature type="binding site" evidence="1">
    <location>
        <position position="198"/>
    </location>
    <ligand>
        <name>histamine</name>
        <dbReference type="ChEBI" id="CHEBI:58432"/>
    </ligand>
</feature>
<feature type="binding site" evidence="1">
    <location>
        <position position="431"/>
    </location>
    <ligand>
        <name>histamine</name>
        <dbReference type="ChEBI" id="CHEBI:58432"/>
    </ligand>
</feature>
<feature type="modified residue" description="Phosphothreonine" evidence="1">
    <location>
        <position position="140"/>
    </location>
</feature>
<feature type="modified residue" description="Phosphothreonine" evidence="1">
    <location>
        <position position="142"/>
    </location>
</feature>
<feature type="modified residue" description="Phosphoserine" evidence="1">
    <location>
        <position position="230"/>
    </location>
</feature>
<feature type="modified residue" description="Phosphothreonine" evidence="1">
    <location>
        <position position="279"/>
    </location>
</feature>
<feature type="modified residue" description="Phosphoserine" evidence="2">
    <location>
        <position position="344"/>
    </location>
</feature>
<feature type="modified residue" description="Phosphoserine" evidence="2">
    <location>
        <position position="347"/>
    </location>
</feature>
<feature type="modified residue" description="Phosphoserine" evidence="2">
    <location>
        <position position="380"/>
    </location>
</feature>
<feature type="modified residue" description="Phosphoserine" evidence="1">
    <location>
        <position position="396"/>
    </location>
</feature>
<feature type="modified residue" description="Phosphoserine" evidence="1">
    <location>
        <position position="398"/>
    </location>
</feature>
<feature type="glycosylation site" description="N-linked (GlcNAc...) asparagine" evidence="3">
    <location>
        <position position="5"/>
    </location>
</feature>
<feature type="glycosylation site" description="N-linked (GlcNAc...) asparagine" evidence="3">
    <location>
        <position position="18"/>
    </location>
</feature>
<feature type="disulfide bond" evidence="4">
    <location>
        <begin position="100"/>
        <end position="180"/>
    </location>
</feature>
<feature type="disulfide bond" evidence="4">
    <location>
        <begin position="441"/>
        <end position="444"/>
    </location>
</feature>
<comment type="function">
    <text evidence="1 2">G-protein-coupled receptor for histamine, a biogenic amine that functions as an immune modulator and a neurotransmitter (By similarity). Through the H1 receptor, histamine mediates the contraction of smooth muscles and increases capillary permeability due to contraction of terminal venules. Also mediates neurotransmission in the central nervous system and thereby regulates circadian rhythms, emotional and locomotor activities as well as cognitive functions (By similarity).</text>
</comment>
<comment type="subcellular location">
    <subcellularLocation>
        <location evidence="1">Cell membrane</location>
        <topology evidence="1">Multi-pass membrane protein</topology>
    </subcellularLocation>
</comment>
<comment type="domain">
    <text evidence="1">Histamine activates the receptor by forming hydrogen bonds with transmembrane domains 3 and 6, squashing the ligand-binding pocket on the extracellular side and opening the cavity for G-protein engagement on the intracellular side.</text>
</comment>
<comment type="PTM">
    <text evidence="1">Phosphorylation at sites in the second and third cytoplasmic loops independently contribute to agonist-induced receptor down-regulation.</text>
</comment>
<comment type="similarity">
    <text evidence="4">Belongs to the G-protein coupled receptor 1 family.</text>
</comment>
<protein>
    <recommendedName>
        <fullName evidence="1">Histamine H1 receptor</fullName>
        <shortName evidence="1">H1R</shortName>
        <shortName evidence="1">HH1R</shortName>
    </recommendedName>
</protein>
<keyword id="KW-1003">Cell membrane</keyword>
<keyword id="KW-1015">Disulfide bond</keyword>
<keyword id="KW-0297">G-protein coupled receptor</keyword>
<keyword id="KW-0325">Glycoprotein</keyword>
<keyword id="KW-0472">Membrane</keyword>
<keyword id="KW-0597">Phosphoprotein</keyword>
<keyword id="KW-0675">Receptor</keyword>
<keyword id="KW-1185">Reference proteome</keyword>
<keyword id="KW-0807">Transducer</keyword>
<keyword id="KW-0812">Transmembrane</keyword>
<keyword id="KW-1133">Transmembrane helix</keyword>
<reference key="1">
    <citation type="journal article" date="2004" name="Mol. Biol. Evol.">
        <title>Human-specific amino acid changes found in 103 protein-coding genes.</title>
        <authorList>
            <person name="Kitano T."/>
            <person name="Liu Y.-H."/>
            <person name="Ueda S."/>
            <person name="Saitou N."/>
        </authorList>
    </citation>
    <scope>NUCLEOTIDE SEQUENCE [GENOMIC DNA]</scope>
</reference>
<sequence length="487" mass="55635">MSLPNSSCLLEDKMCEGNKTTMASPQLMPLVVVLSTICLVTVGLNLLVLYAVRSERKLHTVGNLYIVSLSVADLIVGAVVMPMNILYLLMSKWSLGRPLCLFWLSMDYVASTASIFSVFILCIDRYRSVQQPLRYLKYRTKTRASATILGAWFLSFLWVIPILGWNHFMQQTSVRREDKCETDFYDVTWFKVMTAIINFYLPTLLMLWFYAKIYKAVRQHCQHRELINGSLPSFSEIKLRPENPKGDAKKPGKESPWEVLKRKPKDAGGGSVLKSPSQTXKEMKSPVVFSQEDDREVDKLHCFPLDIVPMQTAAEGSSRDYVAVNQSHGQLKTDEQGLNTHGASEISEDQMLGDSQSFSRTDSDTTTETAPGKGKLRSGSNTGLDYIKFTWKRLRSHSRQYVSGLHMNRERKAAKQLGFIMAAFILCWIPYFIFFMVIAFCKNCCNEHLHMFTIWLGYINSTLNPLIYPLCNENFKKTFKRILHIRS</sequence>
<name>HRH1_PANTR</name>
<accession>Q9N2B2</accession>
<gene>
    <name evidence="1" type="primary">HRH1</name>
</gene>
<proteinExistence type="inferred from homology"/>
<organism>
    <name type="scientific">Pan troglodytes</name>
    <name type="common">Chimpanzee</name>
    <dbReference type="NCBI Taxonomy" id="9598"/>
    <lineage>
        <taxon>Eukaryota</taxon>
        <taxon>Metazoa</taxon>
        <taxon>Chordata</taxon>
        <taxon>Craniata</taxon>
        <taxon>Vertebrata</taxon>
        <taxon>Euteleostomi</taxon>
        <taxon>Mammalia</taxon>
        <taxon>Eutheria</taxon>
        <taxon>Euarchontoglires</taxon>
        <taxon>Primates</taxon>
        <taxon>Haplorrhini</taxon>
        <taxon>Catarrhini</taxon>
        <taxon>Hominidae</taxon>
        <taxon>Pan</taxon>
    </lineage>
</organism>
<dbReference type="EMBL" id="AB041381">
    <property type="protein sequence ID" value="BAA94466.1"/>
    <property type="molecule type" value="Genomic_DNA"/>
</dbReference>
<dbReference type="RefSeq" id="NP_001107637.1">
    <property type="nucleotide sequence ID" value="NM_001114165.1"/>
</dbReference>
<dbReference type="FunCoup" id="Q9N2B2">
    <property type="interactions" value="973"/>
</dbReference>
<dbReference type="STRING" id="9598.ENSPTRP00000051571"/>
<dbReference type="GlyCosmos" id="Q9N2B2">
    <property type="glycosylation" value="2 sites, No reported glycans"/>
</dbReference>
<dbReference type="PaxDb" id="9598-ENSPTRP00000051571"/>
<dbReference type="GeneID" id="470746"/>
<dbReference type="CTD" id="3269"/>
<dbReference type="eggNOG" id="KOG4220">
    <property type="taxonomic scope" value="Eukaryota"/>
</dbReference>
<dbReference type="InParanoid" id="Q9N2B2"/>
<dbReference type="Proteomes" id="UP000002277">
    <property type="component" value="Unplaced"/>
</dbReference>
<dbReference type="GO" id="GO:0030425">
    <property type="term" value="C:dendrite"/>
    <property type="evidence" value="ECO:0000318"/>
    <property type="project" value="GO_Central"/>
</dbReference>
<dbReference type="GO" id="GO:0005886">
    <property type="term" value="C:plasma membrane"/>
    <property type="evidence" value="ECO:0000250"/>
    <property type="project" value="UniProtKB"/>
</dbReference>
<dbReference type="GO" id="GO:0045202">
    <property type="term" value="C:synapse"/>
    <property type="evidence" value="ECO:0007669"/>
    <property type="project" value="GOC"/>
</dbReference>
<dbReference type="GO" id="GO:0004969">
    <property type="term" value="F:histamine receptor activity"/>
    <property type="evidence" value="ECO:0000250"/>
    <property type="project" value="UniProtKB"/>
</dbReference>
<dbReference type="GO" id="GO:0071420">
    <property type="term" value="P:cellular response to histamine"/>
    <property type="evidence" value="ECO:0000250"/>
    <property type="project" value="UniProtKB"/>
</dbReference>
<dbReference type="GO" id="GO:0007268">
    <property type="term" value="P:chemical synaptic transmission"/>
    <property type="evidence" value="ECO:0000318"/>
    <property type="project" value="GO_Central"/>
</dbReference>
<dbReference type="GO" id="GO:0007186">
    <property type="term" value="P:G protein-coupled receptor signaling pathway"/>
    <property type="evidence" value="ECO:0000250"/>
    <property type="project" value="UniProtKB"/>
</dbReference>
<dbReference type="GO" id="GO:0007187">
    <property type="term" value="P:G protein-coupled receptor signaling pathway, coupled to cyclic nucleotide second messenger"/>
    <property type="evidence" value="ECO:0000318"/>
    <property type="project" value="GO_Central"/>
</dbReference>
<dbReference type="GO" id="GO:0045907">
    <property type="term" value="P:positive regulation of vasoconstriction"/>
    <property type="evidence" value="ECO:0007669"/>
    <property type="project" value="InterPro"/>
</dbReference>
<dbReference type="GO" id="GO:0043114">
    <property type="term" value="P:regulation of vascular permeability"/>
    <property type="evidence" value="ECO:0007669"/>
    <property type="project" value="InterPro"/>
</dbReference>
<dbReference type="CDD" id="cd15050">
    <property type="entry name" value="7tmA_Histamine_H1R"/>
    <property type="match status" value="1"/>
</dbReference>
<dbReference type="FunFam" id="1.20.1070.10:FF:000147">
    <property type="entry name" value="Histamine H1 receptor"/>
    <property type="match status" value="1"/>
</dbReference>
<dbReference type="FunFam" id="1.20.1070.10:FF:000189">
    <property type="entry name" value="Histamine H1 receptor"/>
    <property type="match status" value="1"/>
</dbReference>
<dbReference type="Gene3D" id="1.20.1070.10">
    <property type="entry name" value="Rhodopsin 7-helix transmembrane proteins"/>
    <property type="match status" value="2"/>
</dbReference>
<dbReference type="InterPro" id="IPR000276">
    <property type="entry name" value="GPCR_Rhodpsn"/>
</dbReference>
<dbReference type="InterPro" id="IPR017452">
    <property type="entry name" value="GPCR_Rhodpsn_7TM"/>
</dbReference>
<dbReference type="InterPro" id="IPR000921">
    <property type="entry name" value="Histamine_H1_rcpt"/>
</dbReference>
<dbReference type="PANTHER" id="PTHR24247">
    <property type="entry name" value="5-HYDROXYTRYPTAMINE RECEPTOR"/>
    <property type="match status" value="1"/>
</dbReference>
<dbReference type="PANTHER" id="PTHR24247:SF223">
    <property type="entry name" value="HISTAMINE H1 RECEPTOR"/>
    <property type="match status" value="1"/>
</dbReference>
<dbReference type="Pfam" id="PF00001">
    <property type="entry name" value="7tm_1"/>
    <property type="match status" value="1"/>
</dbReference>
<dbReference type="PRINTS" id="PR00237">
    <property type="entry name" value="GPCRRHODOPSN"/>
</dbReference>
<dbReference type="PRINTS" id="PR00530">
    <property type="entry name" value="HISTAMINEH1R"/>
</dbReference>
<dbReference type="SMART" id="SM01381">
    <property type="entry name" value="7TM_GPCR_Srsx"/>
    <property type="match status" value="1"/>
</dbReference>
<dbReference type="SUPFAM" id="SSF81321">
    <property type="entry name" value="Family A G protein-coupled receptor-like"/>
    <property type="match status" value="1"/>
</dbReference>
<dbReference type="PROSITE" id="PS00237">
    <property type="entry name" value="G_PROTEIN_RECEP_F1_1"/>
    <property type="match status" value="1"/>
</dbReference>
<dbReference type="PROSITE" id="PS50262">
    <property type="entry name" value="G_PROTEIN_RECEP_F1_2"/>
    <property type="match status" value="1"/>
</dbReference>
<evidence type="ECO:0000250" key="1">
    <source>
        <dbReference type="UniProtKB" id="P35367"/>
    </source>
</evidence>
<evidence type="ECO:0000250" key="2">
    <source>
        <dbReference type="UniProtKB" id="P70174"/>
    </source>
</evidence>
<evidence type="ECO:0000255" key="3"/>
<evidence type="ECO:0000255" key="4">
    <source>
        <dbReference type="PROSITE-ProRule" id="PRU00521"/>
    </source>
</evidence>
<evidence type="ECO:0000256" key="5">
    <source>
        <dbReference type="SAM" id="MobiDB-lite"/>
    </source>
</evidence>
<evidence type="ECO:0000305" key="6"/>